<name>OBG_SALG2</name>
<dbReference type="EC" id="3.6.5.-" evidence="1"/>
<dbReference type="EMBL" id="AM933173">
    <property type="protein sequence ID" value="CAR38989.1"/>
    <property type="molecule type" value="Genomic_DNA"/>
</dbReference>
<dbReference type="SMR" id="B5REP9"/>
<dbReference type="KEGG" id="seg:SG3191"/>
<dbReference type="HOGENOM" id="CLU_011747_2_0_6"/>
<dbReference type="Proteomes" id="UP000008321">
    <property type="component" value="Chromosome"/>
</dbReference>
<dbReference type="GO" id="GO:0005737">
    <property type="term" value="C:cytoplasm"/>
    <property type="evidence" value="ECO:0007669"/>
    <property type="project" value="UniProtKB-SubCell"/>
</dbReference>
<dbReference type="GO" id="GO:0005525">
    <property type="term" value="F:GTP binding"/>
    <property type="evidence" value="ECO:0007669"/>
    <property type="project" value="UniProtKB-UniRule"/>
</dbReference>
<dbReference type="GO" id="GO:0003924">
    <property type="term" value="F:GTPase activity"/>
    <property type="evidence" value="ECO:0007669"/>
    <property type="project" value="UniProtKB-UniRule"/>
</dbReference>
<dbReference type="GO" id="GO:0000287">
    <property type="term" value="F:magnesium ion binding"/>
    <property type="evidence" value="ECO:0007669"/>
    <property type="project" value="InterPro"/>
</dbReference>
<dbReference type="GO" id="GO:0042254">
    <property type="term" value="P:ribosome biogenesis"/>
    <property type="evidence" value="ECO:0007669"/>
    <property type="project" value="UniProtKB-UniRule"/>
</dbReference>
<dbReference type="CDD" id="cd01898">
    <property type="entry name" value="Obg"/>
    <property type="match status" value="1"/>
</dbReference>
<dbReference type="FunFam" id="2.70.210.12:FF:000001">
    <property type="entry name" value="GTPase Obg"/>
    <property type="match status" value="1"/>
</dbReference>
<dbReference type="FunFam" id="3.40.50.300:FF:000185">
    <property type="entry name" value="GTPase Obg"/>
    <property type="match status" value="1"/>
</dbReference>
<dbReference type="Gene3D" id="2.70.210.12">
    <property type="entry name" value="GTP1/OBG domain"/>
    <property type="match status" value="1"/>
</dbReference>
<dbReference type="Gene3D" id="3.40.50.300">
    <property type="entry name" value="P-loop containing nucleotide triphosphate hydrolases"/>
    <property type="match status" value="1"/>
</dbReference>
<dbReference type="HAMAP" id="MF_01454">
    <property type="entry name" value="GTPase_Obg"/>
    <property type="match status" value="1"/>
</dbReference>
<dbReference type="InterPro" id="IPR031167">
    <property type="entry name" value="G_OBG"/>
</dbReference>
<dbReference type="InterPro" id="IPR006073">
    <property type="entry name" value="GTP-bd"/>
</dbReference>
<dbReference type="InterPro" id="IPR014100">
    <property type="entry name" value="GTP-bd_Obg/CgtA"/>
</dbReference>
<dbReference type="InterPro" id="IPR006074">
    <property type="entry name" value="GTP1-OBG_CS"/>
</dbReference>
<dbReference type="InterPro" id="IPR006169">
    <property type="entry name" value="GTP1_OBG_dom"/>
</dbReference>
<dbReference type="InterPro" id="IPR036726">
    <property type="entry name" value="GTP1_OBG_dom_sf"/>
</dbReference>
<dbReference type="InterPro" id="IPR045086">
    <property type="entry name" value="OBG_GTPase"/>
</dbReference>
<dbReference type="InterPro" id="IPR027417">
    <property type="entry name" value="P-loop_NTPase"/>
</dbReference>
<dbReference type="NCBIfam" id="TIGR02729">
    <property type="entry name" value="Obg_CgtA"/>
    <property type="match status" value="1"/>
</dbReference>
<dbReference type="NCBIfam" id="NF008955">
    <property type="entry name" value="PRK12297.1"/>
    <property type="match status" value="1"/>
</dbReference>
<dbReference type="NCBIfam" id="NF008956">
    <property type="entry name" value="PRK12299.1"/>
    <property type="match status" value="1"/>
</dbReference>
<dbReference type="PANTHER" id="PTHR11702">
    <property type="entry name" value="DEVELOPMENTALLY REGULATED GTP-BINDING PROTEIN-RELATED"/>
    <property type="match status" value="1"/>
</dbReference>
<dbReference type="PANTHER" id="PTHR11702:SF31">
    <property type="entry name" value="MITOCHONDRIAL RIBOSOME-ASSOCIATED GTPASE 2"/>
    <property type="match status" value="1"/>
</dbReference>
<dbReference type="Pfam" id="PF01018">
    <property type="entry name" value="GTP1_OBG"/>
    <property type="match status" value="1"/>
</dbReference>
<dbReference type="Pfam" id="PF01926">
    <property type="entry name" value="MMR_HSR1"/>
    <property type="match status" value="1"/>
</dbReference>
<dbReference type="PIRSF" id="PIRSF002401">
    <property type="entry name" value="GTP_bd_Obg/CgtA"/>
    <property type="match status" value="1"/>
</dbReference>
<dbReference type="PRINTS" id="PR00326">
    <property type="entry name" value="GTP1OBG"/>
</dbReference>
<dbReference type="SUPFAM" id="SSF82051">
    <property type="entry name" value="Obg GTP-binding protein N-terminal domain"/>
    <property type="match status" value="1"/>
</dbReference>
<dbReference type="SUPFAM" id="SSF52540">
    <property type="entry name" value="P-loop containing nucleoside triphosphate hydrolases"/>
    <property type="match status" value="1"/>
</dbReference>
<dbReference type="PROSITE" id="PS51710">
    <property type="entry name" value="G_OBG"/>
    <property type="match status" value="1"/>
</dbReference>
<dbReference type="PROSITE" id="PS00905">
    <property type="entry name" value="GTP1_OBG"/>
    <property type="match status" value="1"/>
</dbReference>
<dbReference type="PROSITE" id="PS51883">
    <property type="entry name" value="OBG"/>
    <property type="match status" value="1"/>
</dbReference>
<reference key="1">
    <citation type="journal article" date="2008" name="Genome Res.">
        <title>Comparative genome analysis of Salmonella enteritidis PT4 and Salmonella gallinarum 287/91 provides insights into evolutionary and host adaptation pathways.</title>
        <authorList>
            <person name="Thomson N.R."/>
            <person name="Clayton D.J."/>
            <person name="Windhorst D."/>
            <person name="Vernikos G."/>
            <person name="Davidson S."/>
            <person name="Churcher C."/>
            <person name="Quail M.A."/>
            <person name="Stevens M."/>
            <person name="Jones M.A."/>
            <person name="Watson M."/>
            <person name="Barron A."/>
            <person name="Layton A."/>
            <person name="Pickard D."/>
            <person name="Kingsley R.A."/>
            <person name="Bignell A."/>
            <person name="Clark L."/>
            <person name="Harris B."/>
            <person name="Ormond D."/>
            <person name="Abdellah Z."/>
            <person name="Brooks K."/>
            <person name="Cherevach I."/>
            <person name="Chillingworth T."/>
            <person name="Woodward J."/>
            <person name="Norberczak H."/>
            <person name="Lord A."/>
            <person name="Arrowsmith C."/>
            <person name="Jagels K."/>
            <person name="Moule S."/>
            <person name="Mungall K."/>
            <person name="Saunders M."/>
            <person name="Whitehead S."/>
            <person name="Chabalgoity J.A."/>
            <person name="Maskell D."/>
            <person name="Humphreys T."/>
            <person name="Roberts M."/>
            <person name="Barrow P.A."/>
            <person name="Dougan G."/>
            <person name="Parkhill J."/>
        </authorList>
    </citation>
    <scope>NUCLEOTIDE SEQUENCE [LARGE SCALE GENOMIC DNA]</scope>
    <source>
        <strain>287/91 / NCTC 13346</strain>
    </source>
</reference>
<keyword id="KW-0963">Cytoplasm</keyword>
<keyword id="KW-0342">GTP-binding</keyword>
<keyword id="KW-0378">Hydrolase</keyword>
<keyword id="KW-0460">Magnesium</keyword>
<keyword id="KW-0479">Metal-binding</keyword>
<keyword id="KW-0547">Nucleotide-binding</keyword>
<organism>
    <name type="scientific">Salmonella gallinarum (strain 287/91 / NCTC 13346)</name>
    <dbReference type="NCBI Taxonomy" id="550538"/>
    <lineage>
        <taxon>Bacteria</taxon>
        <taxon>Pseudomonadati</taxon>
        <taxon>Pseudomonadota</taxon>
        <taxon>Gammaproteobacteria</taxon>
        <taxon>Enterobacterales</taxon>
        <taxon>Enterobacteriaceae</taxon>
        <taxon>Salmonella</taxon>
    </lineage>
</organism>
<evidence type="ECO:0000255" key="1">
    <source>
        <dbReference type="HAMAP-Rule" id="MF_01454"/>
    </source>
</evidence>
<evidence type="ECO:0000255" key="2">
    <source>
        <dbReference type="PROSITE-ProRule" id="PRU01231"/>
    </source>
</evidence>
<evidence type="ECO:0000256" key="3">
    <source>
        <dbReference type="SAM" id="MobiDB-lite"/>
    </source>
</evidence>
<accession>B5REP9</accession>
<sequence length="390" mass="43132">MKFVDEASILVVAGDGGNGCVSFRREKYIPKGGPDGGDGGDGGDVWMEADENLNTLIDYRFEKSFRAERGQNGASRDCTGKRGKDVTIKVPVGTRVIDQGTGETMGDMTKHGQRLLVAKGGWHGLGNTRFKSSVNRTPRQKTNGTPGDKRDLLLELMLLADVGMLGMPNAGKSTFIRAVSAAKPKVADYPFTTLVPSLGVVRMDSEKSFVVADIPGLIEGAAEGAGLGIRFLKHLERCRVLLHLIDIDPIDGSDPVENARIIIGELEKYSQDLAAKPRWLVFNKIDLMDKTEAEEKAKAIAEALGWEGKYYLISAASQLGVKDLCWDVMTFIIENPIAQAEEAKQPEKVEFMWDDYHRQQLVEVEEDADDDWDDDWDEDDEEGVEFIYKR</sequence>
<gene>
    <name evidence="1" type="primary">obg</name>
    <name type="ordered locus">SG3191</name>
</gene>
<protein>
    <recommendedName>
        <fullName evidence="1">GTPase Obg</fullName>
        <ecNumber evidence="1">3.6.5.-</ecNumber>
    </recommendedName>
    <alternativeName>
        <fullName evidence="1">GTP-binding protein Obg</fullName>
    </alternativeName>
</protein>
<proteinExistence type="inferred from homology"/>
<comment type="function">
    <text evidence="1">An essential GTPase which binds GTP, GDP and possibly (p)ppGpp with moderate affinity, with high nucleotide exchange rates and a fairly low GTP hydrolysis rate. Plays a role in control of the cell cycle, stress response, ribosome biogenesis and in those bacteria that undergo differentiation, in morphogenesis control.</text>
</comment>
<comment type="cofactor">
    <cofactor evidence="1">
        <name>Mg(2+)</name>
        <dbReference type="ChEBI" id="CHEBI:18420"/>
    </cofactor>
</comment>
<comment type="subunit">
    <text evidence="1">Monomer.</text>
</comment>
<comment type="subcellular location">
    <subcellularLocation>
        <location evidence="1">Cytoplasm</location>
    </subcellularLocation>
</comment>
<comment type="similarity">
    <text evidence="1">Belongs to the TRAFAC class OBG-HflX-like GTPase superfamily. OBG GTPase family.</text>
</comment>
<feature type="chain" id="PRO_0000386224" description="GTPase Obg">
    <location>
        <begin position="1"/>
        <end position="390"/>
    </location>
</feature>
<feature type="domain" description="Obg" evidence="2">
    <location>
        <begin position="1"/>
        <end position="159"/>
    </location>
</feature>
<feature type="domain" description="OBG-type G" evidence="1">
    <location>
        <begin position="160"/>
        <end position="333"/>
    </location>
</feature>
<feature type="region of interest" description="Disordered" evidence="3">
    <location>
        <begin position="127"/>
        <end position="147"/>
    </location>
</feature>
<feature type="compositionally biased region" description="Polar residues" evidence="3">
    <location>
        <begin position="129"/>
        <end position="145"/>
    </location>
</feature>
<feature type="binding site" evidence="1">
    <location>
        <begin position="166"/>
        <end position="173"/>
    </location>
    <ligand>
        <name>GTP</name>
        <dbReference type="ChEBI" id="CHEBI:37565"/>
    </ligand>
</feature>
<feature type="binding site" evidence="1">
    <location>
        <position position="173"/>
    </location>
    <ligand>
        <name>Mg(2+)</name>
        <dbReference type="ChEBI" id="CHEBI:18420"/>
    </ligand>
</feature>
<feature type="binding site" evidence="1">
    <location>
        <begin position="191"/>
        <end position="195"/>
    </location>
    <ligand>
        <name>GTP</name>
        <dbReference type="ChEBI" id="CHEBI:37565"/>
    </ligand>
</feature>
<feature type="binding site" evidence="1">
    <location>
        <position position="193"/>
    </location>
    <ligand>
        <name>Mg(2+)</name>
        <dbReference type="ChEBI" id="CHEBI:18420"/>
    </ligand>
</feature>
<feature type="binding site" evidence="1">
    <location>
        <begin position="213"/>
        <end position="216"/>
    </location>
    <ligand>
        <name>GTP</name>
        <dbReference type="ChEBI" id="CHEBI:37565"/>
    </ligand>
</feature>
<feature type="binding site" evidence="1">
    <location>
        <begin position="283"/>
        <end position="286"/>
    </location>
    <ligand>
        <name>GTP</name>
        <dbReference type="ChEBI" id="CHEBI:37565"/>
    </ligand>
</feature>
<feature type="binding site" evidence="1">
    <location>
        <begin position="314"/>
        <end position="316"/>
    </location>
    <ligand>
        <name>GTP</name>
        <dbReference type="ChEBI" id="CHEBI:37565"/>
    </ligand>
</feature>